<protein>
    <recommendedName>
        <fullName evidence="1">Ribosomal RNA small subunit methyltransferase H</fullName>
        <ecNumber evidence="1">2.1.1.199</ecNumber>
    </recommendedName>
    <alternativeName>
        <fullName evidence="1">16S rRNA m(4)C1402 methyltransferase</fullName>
    </alternativeName>
    <alternativeName>
        <fullName evidence="1">rRNA (cytosine-N(4)-)-methyltransferase RsmH</fullName>
    </alternativeName>
</protein>
<comment type="function">
    <text evidence="1">Specifically methylates the N4 position of cytidine in position 1402 (C1402) of 16S rRNA.</text>
</comment>
<comment type="catalytic activity">
    <reaction evidence="1">
        <text>cytidine(1402) in 16S rRNA + S-adenosyl-L-methionine = N(4)-methylcytidine(1402) in 16S rRNA + S-adenosyl-L-homocysteine + H(+)</text>
        <dbReference type="Rhea" id="RHEA:42928"/>
        <dbReference type="Rhea" id="RHEA-COMP:10286"/>
        <dbReference type="Rhea" id="RHEA-COMP:10287"/>
        <dbReference type="ChEBI" id="CHEBI:15378"/>
        <dbReference type="ChEBI" id="CHEBI:57856"/>
        <dbReference type="ChEBI" id="CHEBI:59789"/>
        <dbReference type="ChEBI" id="CHEBI:74506"/>
        <dbReference type="ChEBI" id="CHEBI:82748"/>
        <dbReference type="EC" id="2.1.1.199"/>
    </reaction>
</comment>
<comment type="subcellular location">
    <subcellularLocation>
        <location evidence="1">Cytoplasm</location>
    </subcellularLocation>
</comment>
<comment type="similarity">
    <text evidence="1">Belongs to the methyltransferase superfamily. RsmH family.</text>
</comment>
<organism>
    <name type="scientific">Acidiphilium cryptum (strain JF-5)</name>
    <dbReference type="NCBI Taxonomy" id="349163"/>
    <lineage>
        <taxon>Bacteria</taxon>
        <taxon>Pseudomonadati</taxon>
        <taxon>Pseudomonadota</taxon>
        <taxon>Alphaproteobacteria</taxon>
        <taxon>Acetobacterales</taxon>
        <taxon>Acidocellaceae</taxon>
        <taxon>Acidiphilium</taxon>
    </lineage>
</organism>
<reference key="1">
    <citation type="submission" date="2007-05" db="EMBL/GenBank/DDBJ databases">
        <title>Complete sequence of chromosome of Acidiphilium cryptum JF-5.</title>
        <authorList>
            <consortium name="US DOE Joint Genome Institute"/>
            <person name="Copeland A."/>
            <person name="Lucas S."/>
            <person name="Lapidus A."/>
            <person name="Barry K."/>
            <person name="Detter J.C."/>
            <person name="Glavina del Rio T."/>
            <person name="Hammon N."/>
            <person name="Israni S."/>
            <person name="Dalin E."/>
            <person name="Tice H."/>
            <person name="Pitluck S."/>
            <person name="Sims D."/>
            <person name="Brettin T."/>
            <person name="Bruce D."/>
            <person name="Han C."/>
            <person name="Schmutz J."/>
            <person name="Larimer F."/>
            <person name="Land M."/>
            <person name="Hauser L."/>
            <person name="Kyrpides N."/>
            <person name="Kim E."/>
            <person name="Magnuson T."/>
            <person name="Richardson P."/>
        </authorList>
    </citation>
    <scope>NUCLEOTIDE SEQUENCE [LARGE SCALE GENOMIC DNA]</scope>
    <source>
        <strain>JF-5</strain>
    </source>
</reference>
<sequence>MSGGLSHVPVLREEAVAMLAPRADGVYLDGTFGGGGYSASMLEAASCTVWAIDRDPAAIARGAALAARYPDRLHLIEGRFGDLLALLRDRGVTALDGAVFDFGVSSYQLDDPSRGFSFRTDGPLDMRMGAAGPTAADIVNGYAEAELADILFHFGEERASRRIAAAIVRRRAAQPFETTADLAAVIRTVVRPDRSGIDPATRSFQALRIEVNQELAEIERALEAAASLLAPGGRLVAVSFHSLEDRIVKRFMNAATGHVAAPSRHDPSGLARQAAAPRFRALTRGVVTPGEAETVANPRARSARLRGIERLAA</sequence>
<feature type="chain" id="PRO_0000386680" description="Ribosomal RNA small subunit methyltransferase H">
    <location>
        <begin position="1"/>
        <end position="313"/>
    </location>
</feature>
<feature type="binding site" evidence="1">
    <location>
        <begin position="35"/>
        <end position="37"/>
    </location>
    <ligand>
        <name>S-adenosyl-L-methionine</name>
        <dbReference type="ChEBI" id="CHEBI:59789"/>
    </ligand>
</feature>
<feature type="binding site" evidence="1">
    <location>
        <position position="53"/>
    </location>
    <ligand>
        <name>S-adenosyl-L-methionine</name>
        <dbReference type="ChEBI" id="CHEBI:59789"/>
    </ligand>
</feature>
<feature type="binding site" evidence="1">
    <location>
        <position position="80"/>
    </location>
    <ligand>
        <name>S-adenosyl-L-methionine</name>
        <dbReference type="ChEBI" id="CHEBI:59789"/>
    </ligand>
</feature>
<feature type="binding site" evidence="1">
    <location>
        <position position="101"/>
    </location>
    <ligand>
        <name>S-adenosyl-L-methionine</name>
        <dbReference type="ChEBI" id="CHEBI:59789"/>
    </ligand>
</feature>
<feature type="binding site" evidence="1">
    <location>
        <position position="108"/>
    </location>
    <ligand>
        <name>S-adenosyl-L-methionine</name>
        <dbReference type="ChEBI" id="CHEBI:59789"/>
    </ligand>
</feature>
<gene>
    <name evidence="1" type="primary">rsmH</name>
    <name type="synonym">mraW</name>
    <name type="ordered locus">Acry_0055</name>
</gene>
<dbReference type="EC" id="2.1.1.199" evidence="1"/>
<dbReference type="EMBL" id="CP000697">
    <property type="protein sequence ID" value="ABQ29284.1"/>
    <property type="molecule type" value="Genomic_DNA"/>
</dbReference>
<dbReference type="RefSeq" id="WP_011941241.1">
    <property type="nucleotide sequence ID" value="NC_009484.1"/>
</dbReference>
<dbReference type="SMR" id="A5FUK2"/>
<dbReference type="STRING" id="349163.Acry_0055"/>
<dbReference type="KEGG" id="acr:Acry_0055"/>
<dbReference type="eggNOG" id="COG0275">
    <property type="taxonomic scope" value="Bacteria"/>
</dbReference>
<dbReference type="HOGENOM" id="CLU_038422_1_1_5"/>
<dbReference type="Proteomes" id="UP000000245">
    <property type="component" value="Chromosome"/>
</dbReference>
<dbReference type="GO" id="GO:0005737">
    <property type="term" value="C:cytoplasm"/>
    <property type="evidence" value="ECO:0007669"/>
    <property type="project" value="UniProtKB-SubCell"/>
</dbReference>
<dbReference type="GO" id="GO:0071424">
    <property type="term" value="F:rRNA (cytosine-N4-)-methyltransferase activity"/>
    <property type="evidence" value="ECO:0007669"/>
    <property type="project" value="UniProtKB-UniRule"/>
</dbReference>
<dbReference type="GO" id="GO:0070475">
    <property type="term" value="P:rRNA base methylation"/>
    <property type="evidence" value="ECO:0007669"/>
    <property type="project" value="UniProtKB-UniRule"/>
</dbReference>
<dbReference type="FunFam" id="1.10.150.170:FF:000003">
    <property type="entry name" value="Ribosomal RNA small subunit methyltransferase H"/>
    <property type="match status" value="1"/>
</dbReference>
<dbReference type="Gene3D" id="1.10.150.170">
    <property type="entry name" value="Putative methyltransferase TM0872, insert domain"/>
    <property type="match status" value="1"/>
</dbReference>
<dbReference type="Gene3D" id="3.40.50.150">
    <property type="entry name" value="Vaccinia Virus protein VP39"/>
    <property type="match status" value="1"/>
</dbReference>
<dbReference type="HAMAP" id="MF_01007">
    <property type="entry name" value="16SrRNA_methyltr_H"/>
    <property type="match status" value="1"/>
</dbReference>
<dbReference type="InterPro" id="IPR002903">
    <property type="entry name" value="RsmH"/>
</dbReference>
<dbReference type="InterPro" id="IPR023397">
    <property type="entry name" value="SAM-dep_MeTrfase_MraW_recog"/>
</dbReference>
<dbReference type="InterPro" id="IPR029063">
    <property type="entry name" value="SAM-dependent_MTases_sf"/>
</dbReference>
<dbReference type="NCBIfam" id="TIGR00006">
    <property type="entry name" value="16S rRNA (cytosine(1402)-N(4))-methyltransferase RsmH"/>
    <property type="match status" value="1"/>
</dbReference>
<dbReference type="PANTHER" id="PTHR11265:SF0">
    <property type="entry name" value="12S RRNA N4-METHYLCYTIDINE METHYLTRANSFERASE"/>
    <property type="match status" value="1"/>
</dbReference>
<dbReference type="PANTHER" id="PTHR11265">
    <property type="entry name" value="S-ADENOSYL-METHYLTRANSFERASE MRAW"/>
    <property type="match status" value="1"/>
</dbReference>
<dbReference type="Pfam" id="PF01795">
    <property type="entry name" value="Methyltransf_5"/>
    <property type="match status" value="1"/>
</dbReference>
<dbReference type="PIRSF" id="PIRSF004486">
    <property type="entry name" value="MraW"/>
    <property type="match status" value="1"/>
</dbReference>
<dbReference type="SUPFAM" id="SSF81799">
    <property type="entry name" value="Putative methyltransferase TM0872, insert domain"/>
    <property type="match status" value="1"/>
</dbReference>
<dbReference type="SUPFAM" id="SSF53335">
    <property type="entry name" value="S-adenosyl-L-methionine-dependent methyltransferases"/>
    <property type="match status" value="1"/>
</dbReference>
<name>RSMH_ACICJ</name>
<proteinExistence type="inferred from homology"/>
<keyword id="KW-0963">Cytoplasm</keyword>
<keyword id="KW-0489">Methyltransferase</keyword>
<keyword id="KW-1185">Reference proteome</keyword>
<keyword id="KW-0698">rRNA processing</keyword>
<keyword id="KW-0949">S-adenosyl-L-methionine</keyword>
<keyword id="KW-0808">Transferase</keyword>
<accession>A5FUK2</accession>
<evidence type="ECO:0000255" key="1">
    <source>
        <dbReference type="HAMAP-Rule" id="MF_01007"/>
    </source>
</evidence>